<feature type="chain" id="PRO_1000128172" description="Small ribosomal subunit protein uS9">
    <location>
        <begin position="1"/>
        <end position="130"/>
    </location>
</feature>
<gene>
    <name evidence="1" type="primary">rpsI</name>
    <name type="ordered locus">SSPA2998</name>
</gene>
<accession>B5BGP9</accession>
<name>RS9_SALPK</name>
<keyword id="KW-0687">Ribonucleoprotein</keyword>
<keyword id="KW-0689">Ribosomal protein</keyword>
<organism>
    <name type="scientific">Salmonella paratyphi A (strain AKU_12601)</name>
    <dbReference type="NCBI Taxonomy" id="554290"/>
    <lineage>
        <taxon>Bacteria</taxon>
        <taxon>Pseudomonadati</taxon>
        <taxon>Pseudomonadota</taxon>
        <taxon>Gammaproteobacteria</taxon>
        <taxon>Enterobacterales</taxon>
        <taxon>Enterobacteriaceae</taxon>
        <taxon>Salmonella</taxon>
    </lineage>
</organism>
<comment type="similarity">
    <text evidence="1">Belongs to the universal ribosomal protein uS9 family.</text>
</comment>
<dbReference type="EMBL" id="FM200053">
    <property type="protein sequence ID" value="CAR61247.1"/>
    <property type="molecule type" value="Genomic_DNA"/>
</dbReference>
<dbReference type="RefSeq" id="WP_000829815.1">
    <property type="nucleotide sequence ID" value="NC_011147.1"/>
</dbReference>
<dbReference type="SMR" id="B5BGP9"/>
<dbReference type="GeneID" id="97393262"/>
<dbReference type="KEGG" id="sek:SSPA2998"/>
<dbReference type="HOGENOM" id="CLU_046483_2_1_6"/>
<dbReference type="Proteomes" id="UP000001869">
    <property type="component" value="Chromosome"/>
</dbReference>
<dbReference type="GO" id="GO:0022627">
    <property type="term" value="C:cytosolic small ribosomal subunit"/>
    <property type="evidence" value="ECO:0007669"/>
    <property type="project" value="TreeGrafter"/>
</dbReference>
<dbReference type="GO" id="GO:0003723">
    <property type="term" value="F:RNA binding"/>
    <property type="evidence" value="ECO:0007669"/>
    <property type="project" value="TreeGrafter"/>
</dbReference>
<dbReference type="GO" id="GO:0003735">
    <property type="term" value="F:structural constituent of ribosome"/>
    <property type="evidence" value="ECO:0007669"/>
    <property type="project" value="InterPro"/>
</dbReference>
<dbReference type="GO" id="GO:0006412">
    <property type="term" value="P:translation"/>
    <property type="evidence" value="ECO:0007669"/>
    <property type="project" value="UniProtKB-UniRule"/>
</dbReference>
<dbReference type="FunFam" id="3.30.230.10:FF:000001">
    <property type="entry name" value="30S ribosomal protein S9"/>
    <property type="match status" value="1"/>
</dbReference>
<dbReference type="Gene3D" id="3.30.230.10">
    <property type="match status" value="1"/>
</dbReference>
<dbReference type="HAMAP" id="MF_00532_B">
    <property type="entry name" value="Ribosomal_uS9_B"/>
    <property type="match status" value="1"/>
</dbReference>
<dbReference type="InterPro" id="IPR020568">
    <property type="entry name" value="Ribosomal_Su5_D2-typ_SF"/>
</dbReference>
<dbReference type="InterPro" id="IPR000754">
    <property type="entry name" value="Ribosomal_uS9"/>
</dbReference>
<dbReference type="InterPro" id="IPR023035">
    <property type="entry name" value="Ribosomal_uS9_bac/plastid"/>
</dbReference>
<dbReference type="InterPro" id="IPR020574">
    <property type="entry name" value="Ribosomal_uS9_CS"/>
</dbReference>
<dbReference type="InterPro" id="IPR014721">
    <property type="entry name" value="Ribsml_uS5_D2-typ_fold_subgr"/>
</dbReference>
<dbReference type="NCBIfam" id="NF001099">
    <property type="entry name" value="PRK00132.1"/>
    <property type="match status" value="1"/>
</dbReference>
<dbReference type="PANTHER" id="PTHR21569">
    <property type="entry name" value="RIBOSOMAL PROTEIN S9"/>
    <property type="match status" value="1"/>
</dbReference>
<dbReference type="PANTHER" id="PTHR21569:SF1">
    <property type="entry name" value="SMALL RIBOSOMAL SUBUNIT PROTEIN US9M"/>
    <property type="match status" value="1"/>
</dbReference>
<dbReference type="Pfam" id="PF00380">
    <property type="entry name" value="Ribosomal_S9"/>
    <property type="match status" value="1"/>
</dbReference>
<dbReference type="SUPFAM" id="SSF54211">
    <property type="entry name" value="Ribosomal protein S5 domain 2-like"/>
    <property type="match status" value="1"/>
</dbReference>
<dbReference type="PROSITE" id="PS00360">
    <property type="entry name" value="RIBOSOMAL_S9"/>
    <property type="match status" value="1"/>
</dbReference>
<sequence length="130" mass="14826">MAENQYYGTGRRKSSAARVFIKPGNGKIVINQRSLEQYFGRETARMVVRQPLELVDMVEKLDLYITVKGGGISGQAGAIRHGITRALMEYDESLRGELRKAGFVTRDARQVERKKVGLRKARRRPQFSKR</sequence>
<evidence type="ECO:0000255" key="1">
    <source>
        <dbReference type="HAMAP-Rule" id="MF_00532"/>
    </source>
</evidence>
<evidence type="ECO:0000305" key="2"/>
<protein>
    <recommendedName>
        <fullName evidence="1">Small ribosomal subunit protein uS9</fullName>
    </recommendedName>
    <alternativeName>
        <fullName evidence="2">30S ribosomal protein S9</fullName>
    </alternativeName>
</protein>
<reference key="1">
    <citation type="journal article" date="2009" name="BMC Genomics">
        <title>Pseudogene accumulation in the evolutionary histories of Salmonella enterica serovars Paratyphi A and Typhi.</title>
        <authorList>
            <person name="Holt K.E."/>
            <person name="Thomson N.R."/>
            <person name="Wain J."/>
            <person name="Langridge G.C."/>
            <person name="Hasan R."/>
            <person name="Bhutta Z.A."/>
            <person name="Quail M.A."/>
            <person name="Norbertczak H."/>
            <person name="Walker D."/>
            <person name="Simmonds M."/>
            <person name="White B."/>
            <person name="Bason N."/>
            <person name="Mungall K."/>
            <person name="Dougan G."/>
            <person name="Parkhill J."/>
        </authorList>
    </citation>
    <scope>NUCLEOTIDE SEQUENCE [LARGE SCALE GENOMIC DNA]</scope>
    <source>
        <strain>AKU_12601</strain>
    </source>
</reference>
<proteinExistence type="inferred from homology"/>